<evidence type="ECO:0000255" key="1">
    <source>
        <dbReference type="HAMAP-Rule" id="MF_01351"/>
    </source>
</evidence>
<proteinExistence type="inferred from homology"/>
<name>NDHI_SACOF</name>
<comment type="function">
    <text evidence="1">NDH shuttles electrons from NAD(P)H:plastoquinone, via FMN and iron-sulfur (Fe-S) centers, to quinones in the photosynthetic chain and possibly in a chloroplast respiratory chain. The immediate electron acceptor for the enzyme in this species is believed to be plastoquinone. Couples the redox reaction to proton translocation, and thus conserves the redox energy in a proton gradient.</text>
</comment>
<comment type="catalytic activity">
    <reaction evidence="1">
        <text>a plastoquinone + NADH + (n+1) H(+)(in) = a plastoquinol + NAD(+) + n H(+)(out)</text>
        <dbReference type="Rhea" id="RHEA:42608"/>
        <dbReference type="Rhea" id="RHEA-COMP:9561"/>
        <dbReference type="Rhea" id="RHEA-COMP:9562"/>
        <dbReference type="ChEBI" id="CHEBI:15378"/>
        <dbReference type="ChEBI" id="CHEBI:17757"/>
        <dbReference type="ChEBI" id="CHEBI:57540"/>
        <dbReference type="ChEBI" id="CHEBI:57945"/>
        <dbReference type="ChEBI" id="CHEBI:62192"/>
    </reaction>
</comment>
<comment type="catalytic activity">
    <reaction evidence="1">
        <text>a plastoquinone + NADPH + (n+1) H(+)(in) = a plastoquinol + NADP(+) + n H(+)(out)</text>
        <dbReference type="Rhea" id="RHEA:42612"/>
        <dbReference type="Rhea" id="RHEA-COMP:9561"/>
        <dbReference type="Rhea" id="RHEA-COMP:9562"/>
        <dbReference type="ChEBI" id="CHEBI:15378"/>
        <dbReference type="ChEBI" id="CHEBI:17757"/>
        <dbReference type="ChEBI" id="CHEBI:57783"/>
        <dbReference type="ChEBI" id="CHEBI:58349"/>
        <dbReference type="ChEBI" id="CHEBI:62192"/>
    </reaction>
</comment>
<comment type="cofactor">
    <cofactor evidence="1">
        <name>[4Fe-4S] cluster</name>
        <dbReference type="ChEBI" id="CHEBI:49883"/>
    </cofactor>
    <text evidence="1">Binds 2 [4Fe-4S] clusters per subunit.</text>
</comment>
<comment type="subunit">
    <text evidence="1">NDH is composed of at least 16 different subunits, 5 of which are encoded in the nucleus.</text>
</comment>
<comment type="subcellular location">
    <subcellularLocation>
        <location evidence="1">Plastid</location>
        <location evidence="1">Chloroplast thylakoid membrane</location>
        <topology evidence="1">Peripheral membrane protein</topology>
    </subcellularLocation>
</comment>
<comment type="similarity">
    <text evidence="1">Belongs to the complex I 23 kDa subunit family.</text>
</comment>
<geneLocation type="chloroplast"/>
<accession>Q6ENP3</accession>
<reference key="1">
    <citation type="journal article" date="2004" name="DNA Res.">
        <title>Complete nucleotide sequence of the sugarcane (Saccharum officinarum) chloroplast genome: a comparative analysis of four monocot chloroplast genomes.</title>
        <authorList>
            <person name="Asano T."/>
            <person name="Tsudzuki T."/>
            <person name="Takahashi S."/>
            <person name="Shimada H."/>
            <person name="Kadowaki K."/>
        </authorList>
    </citation>
    <scope>NUCLEOTIDE SEQUENCE [LARGE SCALE GENOMIC DNA]</scope>
</reference>
<organism>
    <name type="scientific">Saccharum officinarum</name>
    <name type="common">Sugarcane</name>
    <dbReference type="NCBI Taxonomy" id="4547"/>
    <lineage>
        <taxon>Eukaryota</taxon>
        <taxon>Viridiplantae</taxon>
        <taxon>Streptophyta</taxon>
        <taxon>Embryophyta</taxon>
        <taxon>Tracheophyta</taxon>
        <taxon>Spermatophyta</taxon>
        <taxon>Magnoliopsida</taxon>
        <taxon>Liliopsida</taxon>
        <taxon>Poales</taxon>
        <taxon>Poaceae</taxon>
        <taxon>PACMAD clade</taxon>
        <taxon>Panicoideae</taxon>
        <taxon>Andropogonodae</taxon>
        <taxon>Andropogoneae</taxon>
        <taxon>Saccharinae</taxon>
        <taxon>Saccharum</taxon>
        <taxon>Saccharum officinarum species complex</taxon>
    </lineage>
</organism>
<gene>
    <name evidence="1" type="primary">ndhI</name>
</gene>
<feature type="chain" id="PRO_0000226917" description="NAD(P)H-quinone oxidoreductase subunit I, chloroplastic">
    <location>
        <begin position="1"/>
        <end position="180"/>
    </location>
</feature>
<feature type="domain" description="4Fe-4S ferredoxin-type 1" evidence="1">
    <location>
        <begin position="55"/>
        <end position="84"/>
    </location>
</feature>
<feature type="domain" description="4Fe-4S ferredoxin-type 2" evidence="1">
    <location>
        <begin position="95"/>
        <end position="124"/>
    </location>
</feature>
<feature type="binding site" evidence="1">
    <location>
        <position position="64"/>
    </location>
    <ligand>
        <name>[4Fe-4S] cluster</name>
        <dbReference type="ChEBI" id="CHEBI:49883"/>
        <label>1</label>
    </ligand>
</feature>
<feature type="binding site" evidence="1">
    <location>
        <position position="67"/>
    </location>
    <ligand>
        <name>[4Fe-4S] cluster</name>
        <dbReference type="ChEBI" id="CHEBI:49883"/>
        <label>1</label>
    </ligand>
</feature>
<feature type="binding site" evidence="1">
    <location>
        <position position="70"/>
    </location>
    <ligand>
        <name>[4Fe-4S] cluster</name>
        <dbReference type="ChEBI" id="CHEBI:49883"/>
        <label>1</label>
    </ligand>
</feature>
<feature type="binding site" evidence="1">
    <location>
        <position position="74"/>
    </location>
    <ligand>
        <name>[4Fe-4S] cluster</name>
        <dbReference type="ChEBI" id="CHEBI:49883"/>
        <label>2</label>
    </ligand>
</feature>
<feature type="binding site" evidence="1">
    <location>
        <position position="104"/>
    </location>
    <ligand>
        <name>[4Fe-4S] cluster</name>
        <dbReference type="ChEBI" id="CHEBI:49883"/>
        <label>2</label>
    </ligand>
</feature>
<feature type="binding site" evidence="1">
    <location>
        <position position="107"/>
    </location>
    <ligand>
        <name>[4Fe-4S] cluster</name>
        <dbReference type="ChEBI" id="CHEBI:49883"/>
        <label>2</label>
    </ligand>
</feature>
<feature type="binding site" evidence="1">
    <location>
        <position position="110"/>
    </location>
    <ligand>
        <name>[4Fe-4S] cluster</name>
        <dbReference type="ChEBI" id="CHEBI:49883"/>
        <label>2</label>
    </ligand>
</feature>
<feature type="binding site" evidence="1">
    <location>
        <position position="114"/>
    </location>
    <ligand>
        <name>[4Fe-4S] cluster</name>
        <dbReference type="ChEBI" id="CHEBI:49883"/>
        <label>1</label>
    </ligand>
</feature>
<dbReference type="EC" id="7.1.1.-" evidence="1"/>
<dbReference type="EMBL" id="AP006714">
    <property type="protein sequence ID" value="BAD27363.1"/>
    <property type="molecule type" value="Genomic_DNA"/>
</dbReference>
<dbReference type="RefSeq" id="YP_009389635.1">
    <property type="nucleotide sequence ID" value="NC_035224.1"/>
</dbReference>
<dbReference type="SMR" id="Q6ENP3"/>
<dbReference type="GeneID" id="33347780"/>
<dbReference type="GO" id="GO:0009535">
    <property type="term" value="C:chloroplast thylakoid membrane"/>
    <property type="evidence" value="ECO:0007669"/>
    <property type="project" value="UniProtKB-SubCell"/>
</dbReference>
<dbReference type="GO" id="GO:0051539">
    <property type="term" value="F:4 iron, 4 sulfur cluster binding"/>
    <property type="evidence" value="ECO:0007669"/>
    <property type="project" value="UniProtKB-KW"/>
</dbReference>
<dbReference type="GO" id="GO:0005506">
    <property type="term" value="F:iron ion binding"/>
    <property type="evidence" value="ECO:0007669"/>
    <property type="project" value="UniProtKB-UniRule"/>
</dbReference>
<dbReference type="GO" id="GO:0008137">
    <property type="term" value="F:NADH dehydrogenase (ubiquinone) activity"/>
    <property type="evidence" value="ECO:0007669"/>
    <property type="project" value="InterPro"/>
</dbReference>
<dbReference type="GO" id="GO:0048038">
    <property type="term" value="F:quinone binding"/>
    <property type="evidence" value="ECO:0007669"/>
    <property type="project" value="UniProtKB-KW"/>
</dbReference>
<dbReference type="GO" id="GO:0019684">
    <property type="term" value="P:photosynthesis, light reaction"/>
    <property type="evidence" value="ECO:0007669"/>
    <property type="project" value="UniProtKB-UniRule"/>
</dbReference>
<dbReference type="Gene3D" id="3.30.70.3270">
    <property type="match status" value="1"/>
</dbReference>
<dbReference type="HAMAP" id="MF_01351">
    <property type="entry name" value="NDH1_NuoI"/>
    <property type="match status" value="1"/>
</dbReference>
<dbReference type="InterPro" id="IPR017896">
    <property type="entry name" value="4Fe4S_Fe-S-bd"/>
</dbReference>
<dbReference type="InterPro" id="IPR017900">
    <property type="entry name" value="4Fe4S_Fe_S_CS"/>
</dbReference>
<dbReference type="InterPro" id="IPR010226">
    <property type="entry name" value="NADH_quinone_OxRdtase_chainI"/>
</dbReference>
<dbReference type="InterPro" id="IPR004497">
    <property type="entry name" value="NDHI"/>
</dbReference>
<dbReference type="NCBIfam" id="TIGR00403">
    <property type="entry name" value="ndhI"/>
    <property type="match status" value="1"/>
</dbReference>
<dbReference type="NCBIfam" id="TIGR01971">
    <property type="entry name" value="NuoI"/>
    <property type="match status" value="1"/>
</dbReference>
<dbReference type="NCBIfam" id="NF004537">
    <property type="entry name" value="PRK05888.1-3"/>
    <property type="match status" value="1"/>
</dbReference>
<dbReference type="PANTHER" id="PTHR47275">
    <property type="entry name" value="NAD(P)H-QUINONE OXIDOREDUCTASE SUBUNIT I, CHLOROPLASTIC"/>
    <property type="match status" value="1"/>
</dbReference>
<dbReference type="PANTHER" id="PTHR47275:SF3">
    <property type="entry name" value="NAD(P)H-QUINONE OXIDOREDUCTASE SUBUNIT I, CHLOROPLASTIC"/>
    <property type="match status" value="1"/>
</dbReference>
<dbReference type="Pfam" id="PF13237">
    <property type="entry name" value="Fer4_10"/>
    <property type="match status" value="1"/>
</dbReference>
<dbReference type="SUPFAM" id="SSF54862">
    <property type="entry name" value="4Fe-4S ferredoxins"/>
    <property type="match status" value="1"/>
</dbReference>
<dbReference type="PROSITE" id="PS00198">
    <property type="entry name" value="4FE4S_FER_1"/>
    <property type="match status" value="2"/>
</dbReference>
<dbReference type="PROSITE" id="PS51379">
    <property type="entry name" value="4FE4S_FER_2"/>
    <property type="match status" value="2"/>
</dbReference>
<keyword id="KW-0004">4Fe-4S</keyword>
<keyword id="KW-0150">Chloroplast</keyword>
<keyword id="KW-0408">Iron</keyword>
<keyword id="KW-0411">Iron-sulfur</keyword>
<keyword id="KW-0472">Membrane</keyword>
<keyword id="KW-0479">Metal-binding</keyword>
<keyword id="KW-0520">NAD</keyword>
<keyword id="KW-0521">NADP</keyword>
<keyword id="KW-0934">Plastid</keyword>
<keyword id="KW-0618">Plastoquinone</keyword>
<keyword id="KW-0874">Quinone</keyword>
<keyword id="KW-0677">Repeat</keyword>
<keyword id="KW-0793">Thylakoid</keyword>
<keyword id="KW-1278">Translocase</keyword>
<sequence>MFPMLTGFISYGQQTIRAARYIGQGLIITLSHTNRLPITIHYPYEKSITSERFRGRIHFEFDKCIACEVCVRVCPIDLPLVDWKFEKDIKRKQLLNYSIDFGVCIFCGNCVEYCPTNCLSMTEEYELSTYDRHELNYNQIALSRLPISIMGDYTIQTIRNSPQSKIDEEKSWNSRTITDY</sequence>
<protein>
    <recommendedName>
        <fullName evidence="1">NAD(P)H-quinone oxidoreductase subunit I, chloroplastic</fullName>
        <ecNumber evidence="1">7.1.1.-</ecNumber>
    </recommendedName>
    <alternativeName>
        <fullName evidence="1">NAD(P)H dehydrogenase subunit I</fullName>
        <shortName evidence="1">NDH subunit I</shortName>
    </alternativeName>
    <alternativeName>
        <fullName evidence="1">NADH-plastoquinone oxidoreductase subunit I</fullName>
    </alternativeName>
</protein>